<protein>
    <recommendedName>
        <fullName>Cytochrome f</fullName>
    </recommendedName>
</protein>
<proteinExistence type="inferred from homology"/>
<name>CYF_ORYSJ</name>
<organism>
    <name type="scientific">Oryza sativa subsp. japonica</name>
    <name type="common">Rice</name>
    <dbReference type="NCBI Taxonomy" id="39947"/>
    <lineage>
        <taxon>Eukaryota</taxon>
        <taxon>Viridiplantae</taxon>
        <taxon>Streptophyta</taxon>
        <taxon>Embryophyta</taxon>
        <taxon>Tracheophyta</taxon>
        <taxon>Spermatophyta</taxon>
        <taxon>Magnoliopsida</taxon>
        <taxon>Liliopsida</taxon>
        <taxon>Poales</taxon>
        <taxon>Poaceae</taxon>
        <taxon>BOP clade</taxon>
        <taxon>Oryzoideae</taxon>
        <taxon>Oryzeae</taxon>
        <taxon>Oryzinae</taxon>
        <taxon>Oryza</taxon>
        <taxon>Oryza sativa</taxon>
    </lineage>
</organism>
<feature type="signal peptide" evidence="1">
    <location>
        <begin position="1"/>
        <end position="35"/>
    </location>
</feature>
<feature type="chain" id="PRO_0000289037" description="Cytochrome f">
    <location>
        <begin position="36"/>
        <end position="320"/>
    </location>
</feature>
<feature type="transmembrane region" description="Helical" evidence="2">
    <location>
        <begin position="286"/>
        <end position="305"/>
    </location>
</feature>
<feature type="binding site" description="axial binding residue" evidence="1">
    <location>
        <position position="36"/>
    </location>
    <ligand>
        <name>heme</name>
        <dbReference type="ChEBI" id="CHEBI:30413"/>
    </ligand>
    <ligandPart>
        <name>Fe</name>
        <dbReference type="ChEBI" id="CHEBI:18248"/>
    </ligandPart>
</feature>
<feature type="binding site" description="covalent" evidence="1">
    <location>
        <position position="56"/>
    </location>
    <ligand>
        <name>heme</name>
        <dbReference type="ChEBI" id="CHEBI:30413"/>
    </ligand>
</feature>
<feature type="binding site" description="covalent" evidence="1">
    <location>
        <position position="59"/>
    </location>
    <ligand>
        <name>heme</name>
        <dbReference type="ChEBI" id="CHEBI:30413"/>
    </ligand>
</feature>
<feature type="binding site" description="axial binding residue" evidence="1">
    <location>
        <position position="60"/>
    </location>
    <ligand>
        <name>heme</name>
        <dbReference type="ChEBI" id="CHEBI:30413"/>
    </ligand>
    <ligandPart>
        <name>Fe</name>
        <dbReference type="ChEBI" id="CHEBI:18248"/>
    </ligandPart>
</feature>
<feature type="sequence conflict" description="In Ref. 1; AAA84590." evidence="3" ref="1">
    <original>M</original>
    <variation>I</variation>
    <location>
        <position position="14"/>
    </location>
</feature>
<feature type="sequence conflict" description="In Ref. 1; AAA84590." evidence="3" ref="1">
    <original>V</original>
    <variation>D</variation>
    <location>
        <position position="20"/>
    </location>
</feature>
<sequence length="320" mass="35467">MENRNTFSWVKEQMTRSISVSIMIYVITRTSISNAYPIFAQQGYENPREATGRIVCANCHLANKPVDIEVPQAVLPDTVFEAVLRIPYDMQLKQVLANGKKGGLNVGAVLILPEGFELAPPDRISPELKEKIGNLSFQSYRPNKKNILVIGPVPGKKYSEIVFPILSPDPAMKKDVHFLKYPIYVGGNRGRGQIYPDGSKSNNTVYNATSTGVVRKILRKEKGGYEISIVDASDGRQVIDLIPPGPELLVSEGESIKLDQPLTSNPNVGGFGQGDAEIVLQDPLRVQGLLFFFASVILAQVFLVLKKKQFEKVQLYEMNF</sequence>
<gene>
    <name type="primary">petA</name>
    <name type="ordered locus">LOC_Osp1g00480</name>
    <name type="ORF">Nip074</name>
</gene>
<reference key="1">
    <citation type="journal article" date="1986" name="Gene">
        <title>Nucleotide sequence of the rice cytochrome f gene and the presence of sequence variation near this gene.</title>
        <authorList>
            <person name="Wu N.-H."/>
            <person name="Cote J.C."/>
            <person name="Wu R."/>
        </authorList>
    </citation>
    <scope>NUCLEOTIDE SEQUENCE [GENOMIC DNA]</scope>
    <source>
        <strain>cv. Labelle</strain>
    </source>
</reference>
<reference key="2">
    <citation type="journal article" date="1989" name="Mol. Gen. Genet.">
        <title>The complete sequence of the rice (Oryza sativa) chloroplast genome: intermolecular recombination between distinct tRNA genes accounts for a major plastid DNA inversion during the evolution of the cereals.</title>
        <authorList>
            <person name="Hiratsuka J."/>
            <person name="Shimada H."/>
            <person name="Whittier R."/>
            <person name="Ishibashi T."/>
            <person name="Sakamoto M."/>
            <person name="Mori M."/>
            <person name="Kondo C."/>
            <person name="Honji Y."/>
            <person name="Sun C.-R."/>
            <person name="Meng B.-Y."/>
            <person name="Li Y.-Q."/>
            <person name="Kanno A."/>
            <person name="Nishizawa Y."/>
            <person name="Hirai A."/>
            <person name="Shinozaki K."/>
            <person name="Sugiura M."/>
        </authorList>
    </citation>
    <scope>NUCLEOTIDE SEQUENCE [LARGE SCALE GENOMIC DNA]</scope>
    <source>
        <strain>cv. Nipponbare</strain>
    </source>
</reference>
<reference key="3">
    <citation type="journal article" date="2004" name="Plant Physiol.">
        <title>A comparison of rice chloroplast genomes.</title>
        <authorList>
            <person name="Tang J."/>
            <person name="Xia H."/>
            <person name="Cao M."/>
            <person name="Zhang X."/>
            <person name="Zeng W."/>
            <person name="Hu S."/>
            <person name="Tong W."/>
            <person name="Wang J."/>
            <person name="Wang J."/>
            <person name="Yu J."/>
            <person name="Yang H."/>
            <person name="Zhu L."/>
        </authorList>
    </citation>
    <scope>NUCLEOTIDE SEQUENCE [LARGE SCALE GENOMIC DNA]</scope>
    <source>
        <strain>cv. Nipponbare</strain>
    </source>
</reference>
<geneLocation type="chloroplast"/>
<keyword id="KW-0150">Chloroplast</keyword>
<keyword id="KW-0249">Electron transport</keyword>
<keyword id="KW-0349">Heme</keyword>
<keyword id="KW-0408">Iron</keyword>
<keyword id="KW-0472">Membrane</keyword>
<keyword id="KW-0479">Metal-binding</keyword>
<keyword id="KW-0602">Photosynthesis</keyword>
<keyword id="KW-0934">Plastid</keyword>
<keyword id="KW-1185">Reference proteome</keyword>
<keyword id="KW-0732">Signal</keyword>
<keyword id="KW-0793">Thylakoid</keyword>
<keyword id="KW-0812">Transmembrane</keyword>
<keyword id="KW-1133">Transmembrane helix</keyword>
<keyword id="KW-0813">Transport</keyword>
<evidence type="ECO:0000250" key="1"/>
<evidence type="ECO:0000255" key="2"/>
<evidence type="ECO:0000305" key="3"/>
<accession>P0C389</accession>
<accession>P07888</accession>
<accession>Q6QXT8</accession>
<accession>Q6QY65</accession>
<dbReference type="EMBL" id="M15955">
    <property type="protein sequence ID" value="AAA84590.1"/>
    <property type="molecule type" value="Genomic_DNA"/>
</dbReference>
<dbReference type="EMBL" id="X15901">
    <property type="protein sequence ID" value="CAA33961.1"/>
    <property type="molecule type" value="Genomic_DNA"/>
</dbReference>
<dbReference type="EMBL" id="AY522330">
    <property type="protein sequence ID" value="AAS46130.1"/>
    <property type="status" value="ALT_INIT"/>
    <property type="molecule type" value="Genomic_DNA"/>
</dbReference>
<dbReference type="PIR" id="JQ0239">
    <property type="entry name" value="CFRZ"/>
</dbReference>
<dbReference type="RefSeq" id="NP_039399.1">
    <property type="nucleotide sequence ID" value="NC_001320.1"/>
</dbReference>
<dbReference type="SMR" id="P0C389"/>
<dbReference type="BioGRID" id="792770">
    <property type="interactions" value="1"/>
</dbReference>
<dbReference type="FunCoup" id="P0C389">
    <property type="interactions" value="477"/>
</dbReference>
<dbReference type="STRING" id="39947.P0C389"/>
<dbReference type="PaxDb" id="39947-P0C389"/>
<dbReference type="EnsemblPlants" id="transcript-petA">
    <property type="protein sequence ID" value="cds-CAA33961.1"/>
    <property type="gene ID" value="gene-petA"/>
</dbReference>
<dbReference type="GeneID" id="3131402"/>
<dbReference type="Gramene" id="transcript-petA">
    <property type="protein sequence ID" value="cds-CAA33961.1"/>
    <property type="gene ID" value="gene-petA"/>
</dbReference>
<dbReference type="KEGG" id="dosa:petA"/>
<dbReference type="KEGG" id="osa:3131402"/>
<dbReference type="InParanoid" id="P0C389"/>
<dbReference type="OrthoDB" id="604292at2759"/>
<dbReference type="Proteomes" id="UP000059680">
    <property type="component" value="Chloroplast"/>
</dbReference>
<dbReference type="GO" id="GO:0009535">
    <property type="term" value="C:chloroplast thylakoid membrane"/>
    <property type="evidence" value="ECO:0007669"/>
    <property type="project" value="UniProtKB-SubCell"/>
</dbReference>
<dbReference type="GO" id="GO:0009536">
    <property type="term" value="C:plastid"/>
    <property type="evidence" value="ECO:0000305"/>
    <property type="project" value="Gramene"/>
</dbReference>
<dbReference type="GO" id="GO:0009055">
    <property type="term" value="F:electron transfer activity"/>
    <property type="evidence" value="ECO:0007669"/>
    <property type="project" value="UniProtKB-UniRule"/>
</dbReference>
<dbReference type="GO" id="GO:0020037">
    <property type="term" value="F:heme binding"/>
    <property type="evidence" value="ECO:0007669"/>
    <property type="project" value="InterPro"/>
</dbReference>
<dbReference type="GO" id="GO:0005506">
    <property type="term" value="F:iron ion binding"/>
    <property type="evidence" value="ECO:0007669"/>
    <property type="project" value="InterPro"/>
</dbReference>
<dbReference type="GO" id="GO:0015979">
    <property type="term" value="P:photosynthesis"/>
    <property type="evidence" value="ECO:0007669"/>
    <property type="project" value="UniProtKB-UniRule"/>
</dbReference>
<dbReference type="FunFam" id="1.20.5.700:FF:000001">
    <property type="entry name" value="Cytochrome f"/>
    <property type="match status" value="1"/>
</dbReference>
<dbReference type="FunFam" id="2.40.50.100:FF:000007">
    <property type="entry name" value="Cytochrome f"/>
    <property type="match status" value="1"/>
</dbReference>
<dbReference type="FunFam" id="2.60.40.830:FF:000001">
    <property type="entry name" value="Cytochrome f"/>
    <property type="match status" value="1"/>
</dbReference>
<dbReference type="Gene3D" id="2.40.50.100">
    <property type="match status" value="1"/>
</dbReference>
<dbReference type="Gene3D" id="2.60.40.830">
    <property type="entry name" value="Cytochrome f large domain"/>
    <property type="match status" value="1"/>
</dbReference>
<dbReference type="Gene3D" id="1.20.5.700">
    <property type="entry name" value="Single helix bin"/>
    <property type="match status" value="1"/>
</dbReference>
<dbReference type="HAMAP" id="MF_00610">
    <property type="entry name" value="Cytb6_f_cytF"/>
    <property type="match status" value="1"/>
</dbReference>
<dbReference type="InterPro" id="IPR024058">
    <property type="entry name" value="Cyt-f_TM"/>
</dbReference>
<dbReference type="InterPro" id="IPR002325">
    <property type="entry name" value="Cyt_f"/>
</dbReference>
<dbReference type="InterPro" id="IPR024094">
    <property type="entry name" value="Cyt_f_lg_dom"/>
</dbReference>
<dbReference type="InterPro" id="IPR036826">
    <property type="entry name" value="Cyt_f_lg_dom_sf"/>
</dbReference>
<dbReference type="InterPro" id="IPR011054">
    <property type="entry name" value="Rudment_hybrid_motif"/>
</dbReference>
<dbReference type="PANTHER" id="PTHR33288">
    <property type="match status" value="1"/>
</dbReference>
<dbReference type="PANTHER" id="PTHR33288:SF10">
    <property type="entry name" value="CYTOCHROME F"/>
    <property type="match status" value="1"/>
</dbReference>
<dbReference type="Pfam" id="PF01333">
    <property type="entry name" value="Apocytochr_F_C"/>
    <property type="match status" value="1"/>
</dbReference>
<dbReference type="Pfam" id="PF16639">
    <property type="entry name" value="Apocytochr_F_N"/>
    <property type="match status" value="1"/>
</dbReference>
<dbReference type="PRINTS" id="PR00610">
    <property type="entry name" value="CYTOCHROMEF"/>
</dbReference>
<dbReference type="SUPFAM" id="SSF103431">
    <property type="entry name" value="Cytochrome f subunit of the cytochrome b6f complex, transmembrane anchor"/>
    <property type="match status" value="1"/>
</dbReference>
<dbReference type="SUPFAM" id="SSF49441">
    <property type="entry name" value="Cytochrome f, large domain"/>
    <property type="match status" value="1"/>
</dbReference>
<dbReference type="SUPFAM" id="SSF51246">
    <property type="entry name" value="Rudiment single hybrid motif"/>
    <property type="match status" value="1"/>
</dbReference>
<dbReference type="PROSITE" id="PS51010">
    <property type="entry name" value="CYTF"/>
    <property type="match status" value="1"/>
</dbReference>
<comment type="function">
    <text evidence="1">Component of the cytochrome b6-f complex, which mediates electron transfer between photosystem II (PSII) and photosystem I (PSI), cyclic electron flow around PSI, and state transitions.</text>
</comment>
<comment type="cofactor">
    <cofactor evidence="1">
        <name>heme</name>
        <dbReference type="ChEBI" id="CHEBI:30413"/>
    </cofactor>
    <text evidence="1">Binds 1 heme group covalently.</text>
</comment>
<comment type="subunit">
    <text evidence="1">The 4 large subunits of the cytochrome b6-f complex are cytochrome b6, subunit IV (17 kDa polypeptide, petD), cytochrome f and the Rieske protein, while the 4 small subunits are PetG, PetL, PetM and PetN. The complex functions as a dimer (By similarity).</text>
</comment>
<comment type="subcellular location">
    <subcellularLocation>
        <location evidence="1">Plastid</location>
        <location evidence="1">Chloroplast thylakoid membrane</location>
        <topology evidence="1">Single-pass membrane protein</topology>
    </subcellularLocation>
</comment>
<comment type="similarity">
    <text evidence="3">Belongs to the cytochrome f family.</text>
</comment>
<comment type="sequence caution" evidence="3">
    <conflict type="erroneous initiation">
        <sequence resource="EMBL-CDS" id="AAS46130"/>
    </conflict>
</comment>